<organism>
    <name type="scientific">Chromobacterium violaceum (strain ATCC 12472 / DSM 30191 / JCM 1249 / CCUG 213 / NBRC 12614 / NCIMB 9131 / NCTC 9757 / MK)</name>
    <dbReference type="NCBI Taxonomy" id="243365"/>
    <lineage>
        <taxon>Bacteria</taxon>
        <taxon>Pseudomonadati</taxon>
        <taxon>Pseudomonadota</taxon>
        <taxon>Betaproteobacteria</taxon>
        <taxon>Neisseriales</taxon>
        <taxon>Chromobacteriaceae</taxon>
        <taxon>Chromobacterium</taxon>
    </lineage>
</organism>
<reference key="1">
    <citation type="journal article" date="2003" name="Proc. Natl. Acad. Sci. U.S.A.">
        <title>The complete genome sequence of Chromobacterium violaceum reveals remarkable and exploitable bacterial adaptability.</title>
        <authorList>
            <person name="Vasconcelos A.T.R."/>
            <person name="de Almeida D.F."/>
            <person name="Hungria M."/>
            <person name="Guimaraes C.T."/>
            <person name="Antonio R.V."/>
            <person name="Almeida F.C."/>
            <person name="de Almeida L.G.P."/>
            <person name="de Almeida R."/>
            <person name="Alves-Gomes J.A."/>
            <person name="Andrade E.M."/>
            <person name="Araripe J."/>
            <person name="de Araujo M.F.F."/>
            <person name="Astolfi-Filho S."/>
            <person name="Azevedo V."/>
            <person name="Baptista A.J."/>
            <person name="Bataus L.A.M."/>
            <person name="Batista J.S."/>
            <person name="Belo A."/>
            <person name="van den Berg C."/>
            <person name="Bogo M."/>
            <person name="Bonatto S."/>
            <person name="Bordignon J."/>
            <person name="Brigido M.M."/>
            <person name="Brito C.A."/>
            <person name="Brocchi M."/>
            <person name="Burity H.A."/>
            <person name="Camargo A.A."/>
            <person name="Cardoso D.D.P."/>
            <person name="Carneiro N.P."/>
            <person name="Carraro D.M."/>
            <person name="Carvalho C.M.B."/>
            <person name="Cascardo J.C.M."/>
            <person name="Cavada B.S."/>
            <person name="Chueire L.M.O."/>
            <person name="Creczynski-Pasa T.B."/>
            <person name="Cunha-Junior N.C."/>
            <person name="Fagundes N."/>
            <person name="Falcao C.L."/>
            <person name="Fantinatti F."/>
            <person name="Farias I.P."/>
            <person name="Felipe M.S.S."/>
            <person name="Ferrari L.P."/>
            <person name="Ferro J.A."/>
            <person name="Ferro M.I.T."/>
            <person name="Franco G.R."/>
            <person name="Freitas N.S.A."/>
            <person name="Furlan L.R."/>
            <person name="Gazzinelli R.T."/>
            <person name="Gomes E.A."/>
            <person name="Goncalves P.R."/>
            <person name="Grangeiro T.B."/>
            <person name="Grattapaglia D."/>
            <person name="Grisard E.C."/>
            <person name="Hanna E.S."/>
            <person name="Jardim S.N."/>
            <person name="Laurino J."/>
            <person name="Leoi L.C.T."/>
            <person name="Lima L.F.A."/>
            <person name="Loureiro M.F."/>
            <person name="Lyra M.C.C.P."/>
            <person name="Madeira H.M.F."/>
            <person name="Manfio G.P."/>
            <person name="Maranhao A.Q."/>
            <person name="Martins W.S."/>
            <person name="di Mauro S.M.Z."/>
            <person name="de Medeiros S.R.B."/>
            <person name="Meissner R.V."/>
            <person name="Moreira M.A.M."/>
            <person name="Nascimento F.F."/>
            <person name="Nicolas M.F."/>
            <person name="Oliveira J.G."/>
            <person name="Oliveira S.C."/>
            <person name="Paixao R.F.C."/>
            <person name="Parente J.A."/>
            <person name="Pedrosa F.O."/>
            <person name="Pena S.D.J."/>
            <person name="Pereira J.O."/>
            <person name="Pereira M."/>
            <person name="Pinto L.S.R.C."/>
            <person name="Pinto L.S."/>
            <person name="Porto J.I.R."/>
            <person name="Potrich D.P."/>
            <person name="Ramalho-Neto C.E."/>
            <person name="Reis A.M.M."/>
            <person name="Rigo L.U."/>
            <person name="Rondinelli E."/>
            <person name="Santos E.B.P."/>
            <person name="Santos F.R."/>
            <person name="Schneider M.P.C."/>
            <person name="Seuanez H.N."/>
            <person name="Silva A.M.R."/>
            <person name="da Silva A.L.C."/>
            <person name="Silva D.W."/>
            <person name="Silva R."/>
            <person name="Simoes I.C."/>
            <person name="Simon D."/>
            <person name="Soares C.M.A."/>
            <person name="Soares R.B.A."/>
            <person name="Souza E.M."/>
            <person name="Souza K.R.L."/>
            <person name="Souza R.C."/>
            <person name="Steffens M.B.R."/>
            <person name="Steindel M."/>
            <person name="Teixeira S.R."/>
            <person name="Urmenyi T."/>
            <person name="Vettore A."/>
            <person name="Wassem R."/>
            <person name="Zaha A."/>
            <person name="Simpson A.J.G."/>
        </authorList>
    </citation>
    <scope>NUCLEOTIDE SEQUENCE [LARGE SCALE GENOMIC DNA]</scope>
    <source>
        <strain>ATCC 12472 / DSM 30191 / JCM 1249 / CCUG 213 / NBRC 12614 / NCIMB 9131 / NCTC 9757 / MK</strain>
    </source>
</reference>
<evidence type="ECO:0000255" key="1">
    <source>
        <dbReference type="HAMAP-Rule" id="MF_01628"/>
    </source>
</evidence>
<name>TYPH_CHRVO</name>
<protein>
    <recommendedName>
        <fullName evidence="1">Thymidine phosphorylase</fullName>
        <ecNumber evidence="1">2.4.2.4</ecNumber>
    </recommendedName>
    <alternativeName>
        <fullName evidence="1">TdRPase</fullName>
    </alternativeName>
</protein>
<sequence length="441" mass="47055">MFLPQEIIRKKRDNLTLSQQEIQQFVAGITDNSVADSQIAALAMAIYFNGMELEENVHLALAMRDSGRRMHWKDLNLPGPIVDKHSTGGVGDVVSLMLGPMVAACGGFVPMISGRGLGHTGGTLDKLSAVPGYNPFPEPELFRKVVKDVGVAIIGQTSDLAPADRRFYATRDVTATVESIALITASILSKKLAAGLDVLVMDVKAGSGAFMPTMQKSIELAERIVKVGNGAGVATTALITEMSQPLASTAGNSIETREAVRYLKGDQRNPRLHEVTMALCAQMLIGGKLAADEADARAKLQAALDSGRAAEIFGRMVTALGGPADFMEHYDRHLAPAPIMRPVYADRAGYVGAMDTRGIGMAVCALGGGRRLATDVLDFRVGLSQFVELGQNIGKDTPLMMIHAADEASFEDAARRVKAAIRIDEAAPSELPLVYQIIRGE</sequence>
<gene>
    <name evidence="1" type="primary">deoA</name>
    <name type="ordered locus">CV_3700</name>
</gene>
<accession>Q7NRT0</accession>
<feature type="chain" id="PRO_0000059051" description="Thymidine phosphorylase">
    <location>
        <begin position="1"/>
        <end position="441"/>
    </location>
</feature>
<proteinExistence type="inferred from homology"/>
<keyword id="KW-0328">Glycosyltransferase</keyword>
<keyword id="KW-1185">Reference proteome</keyword>
<keyword id="KW-0808">Transferase</keyword>
<comment type="function">
    <text evidence="1">The enzymes which catalyze the reversible phosphorolysis of pyrimidine nucleosides are involved in the degradation of these compounds and in their utilization as carbon and energy sources, or in the rescue of pyrimidine bases for nucleotide synthesis.</text>
</comment>
<comment type="catalytic activity">
    <reaction evidence="1">
        <text>thymidine + phosphate = 2-deoxy-alpha-D-ribose 1-phosphate + thymine</text>
        <dbReference type="Rhea" id="RHEA:16037"/>
        <dbReference type="ChEBI" id="CHEBI:17748"/>
        <dbReference type="ChEBI" id="CHEBI:17821"/>
        <dbReference type="ChEBI" id="CHEBI:43474"/>
        <dbReference type="ChEBI" id="CHEBI:57259"/>
        <dbReference type="EC" id="2.4.2.4"/>
    </reaction>
</comment>
<comment type="pathway">
    <text evidence="1">Pyrimidine metabolism; dTMP biosynthesis via salvage pathway; dTMP from thymine: step 1/2.</text>
</comment>
<comment type="subunit">
    <text evidence="1">Homodimer.</text>
</comment>
<comment type="similarity">
    <text evidence="1">Belongs to the thymidine/pyrimidine-nucleoside phosphorylase family.</text>
</comment>
<dbReference type="EC" id="2.4.2.4" evidence="1"/>
<dbReference type="EMBL" id="AE016825">
    <property type="protein sequence ID" value="AAQ61362.1"/>
    <property type="molecule type" value="Genomic_DNA"/>
</dbReference>
<dbReference type="RefSeq" id="WP_011137247.1">
    <property type="nucleotide sequence ID" value="NC_005085.1"/>
</dbReference>
<dbReference type="SMR" id="Q7NRT0"/>
<dbReference type="STRING" id="243365.CV_3700"/>
<dbReference type="KEGG" id="cvi:CV_3700"/>
<dbReference type="eggNOG" id="COG0213">
    <property type="taxonomic scope" value="Bacteria"/>
</dbReference>
<dbReference type="HOGENOM" id="CLU_025040_0_1_4"/>
<dbReference type="OrthoDB" id="9763887at2"/>
<dbReference type="UniPathway" id="UPA00578">
    <property type="reaction ID" value="UER00638"/>
</dbReference>
<dbReference type="Proteomes" id="UP000001424">
    <property type="component" value="Chromosome"/>
</dbReference>
<dbReference type="GO" id="GO:0005829">
    <property type="term" value="C:cytosol"/>
    <property type="evidence" value="ECO:0007669"/>
    <property type="project" value="TreeGrafter"/>
</dbReference>
<dbReference type="GO" id="GO:0004645">
    <property type="term" value="F:1,4-alpha-oligoglucan phosphorylase activity"/>
    <property type="evidence" value="ECO:0007669"/>
    <property type="project" value="InterPro"/>
</dbReference>
<dbReference type="GO" id="GO:0009032">
    <property type="term" value="F:thymidine phosphorylase activity"/>
    <property type="evidence" value="ECO:0007669"/>
    <property type="project" value="UniProtKB-UniRule"/>
</dbReference>
<dbReference type="GO" id="GO:0006206">
    <property type="term" value="P:pyrimidine nucleobase metabolic process"/>
    <property type="evidence" value="ECO:0007669"/>
    <property type="project" value="InterPro"/>
</dbReference>
<dbReference type="GO" id="GO:0046104">
    <property type="term" value="P:thymidine metabolic process"/>
    <property type="evidence" value="ECO:0007669"/>
    <property type="project" value="UniProtKB-UniRule"/>
</dbReference>
<dbReference type="FunFam" id="3.40.1030.10:FF:000001">
    <property type="entry name" value="Thymidine phosphorylase"/>
    <property type="match status" value="1"/>
</dbReference>
<dbReference type="Gene3D" id="3.40.1030.10">
    <property type="entry name" value="Nucleoside phosphorylase/phosphoribosyltransferase catalytic domain"/>
    <property type="match status" value="1"/>
</dbReference>
<dbReference type="Gene3D" id="3.90.1170.30">
    <property type="entry name" value="Pyrimidine nucleoside phosphorylase-like, C-terminal domain"/>
    <property type="match status" value="1"/>
</dbReference>
<dbReference type="Gene3D" id="1.20.970.10">
    <property type="entry name" value="Transferase, Pyrimidine Nucleoside Phosphorylase, Chain C"/>
    <property type="match status" value="1"/>
</dbReference>
<dbReference type="HAMAP" id="MF_01628">
    <property type="entry name" value="Thymid_phosp"/>
    <property type="match status" value="1"/>
</dbReference>
<dbReference type="InterPro" id="IPR000312">
    <property type="entry name" value="Glycosyl_Trfase_fam3"/>
</dbReference>
<dbReference type="InterPro" id="IPR017459">
    <property type="entry name" value="Glycosyl_Trfase_fam3_N_dom"/>
</dbReference>
<dbReference type="InterPro" id="IPR036320">
    <property type="entry name" value="Glycosyl_Trfase_fam3_N_dom_sf"/>
</dbReference>
<dbReference type="InterPro" id="IPR035902">
    <property type="entry name" value="Nuc_phospho_transferase"/>
</dbReference>
<dbReference type="InterPro" id="IPR036566">
    <property type="entry name" value="PYNP-like_C_sf"/>
</dbReference>
<dbReference type="InterPro" id="IPR013102">
    <property type="entry name" value="PYNP_C"/>
</dbReference>
<dbReference type="InterPro" id="IPR018090">
    <property type="entry name" value="Pyrmidine_PPas_bac/euk"/>
</dbReference>
<dbReference type="InterPro" id="IPR017872">
    <property type="entry name" value="Pyrmidine_PPase_CS"/>
</dbReference>
<dbReference type="InterPro" id="IPR000053">
    <property type="entry name" value="Thymidine/pyrmidine_PPase"/>
</dbReference>
<dbReference type="InterPro" id="IPR013465">
    <property type="entry name" value="Thymidine_Pase"/>
</dbReference>
<dbReference type="NCBIfam" id="NF004490">
    <property type="entry name" value="PRK05820.1"/>
    <property type="match status" value="1"/>
</dbReference>
<dbReference type="NCBIfam" id="TIGR02643">
    <property type="entry name" value="T_phosphoryl"/>
    <property type="match status" value="1"/>
</dbReference>
<dbReference type="NCBIfam" id="TIGR02644">
    <property type="entry name" value="Y_phosphoryl"/>
    <property type="match status" value="1"/>
</dbReference>
<dbReference type="PANTHER" id="PTHR10515">
    <property type="entry name" value="THYMIDINE PHOSPHORYLASE"/>
    <property type="match status" value="1"/>
</dbReference>
<dbReference type="PANTHER" id="PTHR10515:SF0">
    <property type="entry name" value="THYMIDINE PHOSPHORYLASE"/>
    <property type="match status" value="1"/>
</dbReference>
<dbReference type="Pfam" id="PF02885">
    <property type="entry name" value="Glycos_trans_3N"/>
    <property type="match status" value="1"/>
</dbReference>
<dbReference type="Pfam" id="PF00591">
    <property type="entry name" value="Glycos_transf_3"/>
    <property type="match status" value="1"/>
</dbReference>
<dbReference type="Pfam" id="PF07831">
    <property type="entry name" value="PYNP_C"/>
    <property type="match status" value="1"/>
</dbReference>
<dbReference type="PIRSF" id="PIRSF000478">
    <property type="entry name" value="TP_PyNP"/>
    <property type="match status" value="1"/>
</dbReference>
<dbReference type="SMART" id="SM00941">
    <property type="entry name" value="PYNP_C"/>
    <property type="match status" value="1"/>
</dbReference>
<dbReference type="SUPFAM" id="SSF52418">
    <property type="entry name" value="Nucleoside phosphorylase/phosphoribosyltransferase catalytic domain"/>
    <property type="match status" value="1"/>
</dbReference>
<dbReference type="SUPFAM" id="SSF47648">
    <property type="entry name" value="Nucleoside phosphorylase/phosphoribosyltransferase N-terminal domain"/>
    <property type="match status" value="1"/>
</dbReference>
<dbReference type="SUPFAM" id="SSF54680">
    <property type="entry name" value="Pyrimidine nucleoside phosphorylase C-terminal domain"/>
    <property type="match status" value="1"/>
</dbReference>
<dbReference type="PROSITE" id="PS00647">
    <property type="entry name" value="THYMID_PHOSPHORYLASE"/>
    <property type="match status" value="1"/>
</dbReference>